<reference key="1">
    <citation type="journal article" date="2011" name="PLoS Genet.">
        <title>Genomic analysis of the necrotrophic fungal pathogens Sclerotinia sclerotiorum and Botrytis cinerea.</title>
        <authorList>
            <person name="Amselem J."/>
            <person name="Cuomo C.A."/>
            <person name="van Kan J.A.L."/>
            <person name="Viaud M."/>
            <person name="Benito E.P."/>
            <person name="Couloux A."/>
            <person name="Coutinho P.M."/>
            <person name="de Vries R.P."/>
            <person name="Dyer P.S."/>
            <person name="Fillinger S."/>
            <person name="Fournier E."/>
            <person name="Gout L."/>
            <person name="Hahn M."/>
            <person name="Kohn L."/>
            <person name="Lapalu N."/>
            <person name="Plummer K.M."/>
            <person name="Pradier J.-M."/>
            <person name="Quevillon E."/>
            <person name="Sharon A."/>
            <person name="Simon A."/>
            <person name="ten Have A."/>
            <person name="Tudzynski B."/>
            <person name="Tudzynski P."/>
            <person name="Wincker P."/>
            <person name="Andrew M."/>
            <person name="Anthouard V."/>
            <person name="Beever R.E."/>
            <person name="Beffa R."/>
            <person name="Benoit I."/>
            <person name="Bouzid O."/>
            <person name="Brault B."/>
            <person name="Chen Z."/>
            <person name="Choquer M."/>
            <person name="Collemare J."/>
            <person name="Cotton P."/>
            <person name="Danchin E.G."/>
            <person name="Da Silva C."/>
            <person name="Gautier A."/>
            <person name="Giraud C."/>
            <person name="Giraud T."/>
            <person name="Gonzalez C."/>
            <person name="Grossetete S."/>
            <person name="Gueldener U."/>
            <person name="Henrissat B."/>
            <person name="Howlett B.J."/>
            <person name="Kodira C."/>
            <person name="Kretschmer M."/>
            <person name="Lappartient A."/>
            <person name="Leroch M."/>
            <person name="Levis C."/>
            <person name="Mauceli E."/>
            <person name="Neuveglise C."/>
            <person name="Oeser B."/>
            <person name="Pearson M."/>
            <person name="Poulain J."/>
            <person name="Poussereau N."/>
            <person name="Quesneville H."/>
            <person name="Rascle C."/>
            <person name="Schumacher J."/>
            <person name="Segurens B."/>
            <person name="Sexton A."/>
            <person name="Silva E."/>
            <person name="Sirven C."/>
            <person name="Soanes D.M."/>
            <person name="Talbot N.J."/>
            <person name="Templeton M."/>
            <person name="Yandava C."/>
            <person name="Yarden O."/>
            <person name="Zeng Q."/>
            <person name="Rollins J.A."/>
            <person name="Lebrun M.-H."/>
            <person name="Dickman M."/>
        </authorList>
    </citation>
    <scope>NUCLEOTIDE SEQUENCE [LARGE SCALE GENOMIC DNA]</scope>
    <source>
        <strain>B05.10</strain>
    </source>
</reference>
<reference key="2">
    <citation type="journal article" date="2012" name="Eukaryot. Cell">
        <title>Genome update of Botrytis cinerea strains B05.10 and T4.</title>
        <authorList>
            <person name="Staats M."/>
            <person name="van Kan J.A.L."/>
        </authorList>
    </citation>
    <scope>NUCLEOTIDE SEQUENCE [LARGE SCALE GENOMIC DNA]</scope>
    <scope>GENOME REANNOTATION</scope>
    <source>
        <strain>B05.10</strain>
    </source>
</reference>
<reference key="3">
    <citation type="journal article" date="2017" name="Mol. Plant Pathol.">
        <title>A gapless genome sequence of the fungus Botrytis cinerea.</title>
        <authorList>
            <person name="van Kan J.A.L."/>
            <person name="Stassen J.H.M."/>
            <person name="Mosbach A."/>
            <person name="van der Lee T.A.J."/>
            <person name="Faino L."/>
            <person name="Farmer A.D."/>
            <person name="Papasotiriou D.G."/>
            <person name="Zhou S."/>
            <person name="Seidl M.F."/>
            <person name="Cottam E."/>
            <person name="Edel D."/>
            <person name="Hahn M."/>
            <person name="Schwartz D.C."/>
            <person name="Dietrich R.A."/>
            <person name="Widdison S."/>
            <person name="Scalliet G."/>
        </authorList>
    </citation>
    <scope>NUCLEOTIDE SEQUENCE [LARGE SCALE GENOMIC DNA]</scope>
    <scope>GENOME REANNOTATION</scope>
    <source>
        <strain>B05.10</strain>
    </source>
</reference>
<name>MTNB_BOTFB</name>
<accession>A6RI12</accession>
<accession>A0A384J6T4</accession>
<keyword id="KW-0028">Amino-acid biosynthesis</keyword>
<keyword id="KW-0963">Cytoplasm</keyword>
<keyword id="KW-0456">Lyase</keyword>
<keyword id="KW-0479">Metal-binding</keyword>
<keyword id="KW-0486">Methionine biosynthesis</keyword>
<keyword id="KW-1185">Reference proteome</keyword>
<keyword id="KW-0862">Zinc</keyword>
<proteinExistence type="inferred from homology"/>
<sequence length="249" mass="28187">MTSQNPTQEPENNDHLIISQDSQHPANLIPELCAKFWHLGWVTGTGGGASIRKDDLVYLAPSGVQKELMKPEHIYVLDITKQLDPKQRIYLRSPPNLKPSQCTPLFMAAFTKRNAGCCIHTHSKWAVLITLLLESAPNTTMFEINNIEQIKAFGKGYTKSGNLGYHDTLRIPVIENTPHEEDLTEYLEEAMEKYPDTYAVLVRRHGVYVWGESVHKAKTQCESLDYLFQIAVDMKKLGLPWLSDVKPIA</sequence>
<feature type="chain" id="PRO_0000393812" description="Methylthioribulose-1-phosphate dehydratase">
    <location>
        <begin position="1"/>
        <end position="249"/>
    </location>
</feature>
<feature type="active site" description="Proton donor/acceptor" evidence="1">
    <location>
        <position position="148"/>
    </location>
</feature>
<feature type="binding site" evidence="1">
    <location>
        <position position="102"/>
    </location>
    <ligand>
        <name>substrate</name>
    </ligand>
</feature>
<feature type="binding site" evidence="1">
    <location>
        <position position="120"/>
    </location>
    <ligand>
        <name>Zn(2+)</name>
        <dbReference type="ChEBI" id="CHEBI:29105"/>
    </ligand>
</feature>
<feature type="binding site" evidence="1">
    <location>
        <position position="122"/>
    </location>
    <ligand>
        <name>Zn(2+)</name>
        <dbReference type="ChEBI" id="CHEBI:29105"/>
    </ligand>
</feature>
<feature type="binding site" evidence="1">
    <location>
        <position position="205"/>
    </location>
    <ligand>
        <name>Zn(2+)</name>
        <dbReference type="ChEBI" id="CHEBI:29105"/>
    </ligand>
</feature>
<protein>
    <recommendedName>
        <fullName evidence="1">Methylthioribulose-1-phosphate dehydratase</fullName>
        <shortName evidence="1">MTRu-1-P dehydratase</shortName>
        <ecNumber evidence="1">4.2.1.109</ecNumber>
    </recommendedName>
</protein>
<comment type="function">
    <text evidence="1">Catalyzes the dehydration of methylthioribulose-1-phosphate (MTRu-1-P) into 2,3-diketo-5-methylthiopentyl-1-phosphate (DK-MTP-1-P).</text>
</comment>
<comment type="catalytic activity">
    <reaction evidence="1">
        <text>5-(methylsulfanyl)-D-ribulose 1-phosphate = 5-methylsulfanyl-2,3-dioxopentyl phosphate + H2O</text>
        <dbReference type="Rhea" id="RHEA:15549"/>
        <dbReference type="ChEBI" id="CHEBI:15377"/>
        <dbReference type="ChEBI" id="CHEBI:58548"/>
        <dbReference type="ChEBI" id="CHEBI:58828"/>
        <dbReference type="EC" id="4.2.1.109"/>
    </reaction>
</comment>
<comment type="cofactor">
    <cofactor evidence="1">
        <name>Zn(2+)</name>
        <dbReference type="ChEBI" id="CHEBI:29105"/>
    </cofactor>
    <text evidence="1">Binds 1 zinc ion per subunit.</text>
</comment>
<comment type="pathway">
    <text evidence="1">Amino-acid biosynthesis; L-methionine biosynthesis via salvage pathway; L-methionine from S-methyl-5-thio-alpha-D-ribose 1-phosphate: step 2/6.</text>
</comment>
<comment type="subcellular location">
    <subcellularLocation>
        <location evidence="1">Cytoplasm</location>
    </subcellularLocation>
</comment>
<comment type="similarity">
    <text evidence="1">Belongs to the aldolase class II family. MtnB subfamily.</text>
</comment>
<dbReference type="EC" id="4.2.1.109" evidence="1"/>
<dbReference type="EMBL" id="CP009805">
    <property type="protein sequence ID" value="ATZ46191.1"/>
    <property type="molecule type" value="Genomic_DNA"/>
</dbReference>
<dbReference type="SMR" id="A6RI12"/>
<dbReference type="EnsemblFungi" id="Bcin01g08310.1">
    <property type="protein sequence ID" value="Bcin01p08310.1"/>
    <property type="gene ID" value="Bcin01g08310"/>
</dbReference>
<dbReference type="GeneID" id="5441691"/>
<dbReference type="KEGG" id="bfu:BCIN_01g08310"/>
<dbReference type="VEuPathDB" id="FungiDB:Bcin01g08310"/>
<dbReference type="OMA" id="WFPGTSG"/>
<dbReference type="OrthoDB" id="191080at2759"/>
<dbReference type="UniPathway" id="UPA00904">
    <property type="reaction ID" value="UER00875"/>
</dbReference>
<dbReference type="Proteomes" id="UP000001798">
    <property type="component" value="Chromosome bcin01"/>
</dbReference>
<dbReference type="GO" id="GO:0005737">
    <property type="term" value="C:cytoplasm"/>
    <property type="evidence" value="ECO:0007669"/>
    <property type="project" value="UniProtKB-SubCell"/>
</dbReference>
<dbReference type="GO" id="GO:0046570">
    <property type="term" value="F:methylthioribulose 1-phosphate dehydratase activity"/>
    <property type="evidence" value="ECO:0007669"/>
    <property type="project" value="UniProtKB-UniRule"/>
</dbReference>
<dbReference type="GO" id="GO:0008270">
    <property type="term" value="F:zinc ion binding"/>
    <property type="evidence" value="ECO:0007669"/>
    <property type="project" value="UniProtKB-UniRule"/>
</dbReference>
<dbReference type="GO" id="GO:0019509">
    <property type="term" value="P:L-methionine salvage from methylthioadenosine"/>
    <property type="evidence" value="ECO:0007669"/>
    <property type="project" value="UniProtKB-UniRule"/>
</dbReference>
<dbReference type="FunFam" id="3.40.225.10:FF:000003">
    <property type="entry name" value="Methylthioribulose-1-phosphate dehydratase"/>
    <property type="match status" value="1"/>
</dbReference>
<dbReference type="Gene3D" id="3.40.225.10">
    <property type="entry name" value="Class II aldolase/adducin N-terminal domain"/>
    <property type="match status" value="1"/>
</dbReference>
<dbReference type="HAMAP" id="MF_03116">
    <property type="entry name" value="Salvage_MtnB_euk"/>
    <property type="match status" value="1"/>
</dbReference>
<dbReference type="InterPro" id="IPR001303">
    <property type="entry name" value="Aldolase_II/adducin_N"/>
</dbReference>
<dbReference type="InterPro" id="IPR036409">
    <property type="entry name" value="Aldolase_II/adducin_N_sf"/>
</dbReference>
<dbReference type="InterPro" id="IPR017714">
    <property type="entry name" value="MethylthioRu-1-P_deHdtase_MtnB"/>
</dbReference>
<dbReference type="InterPro" id="IPR027514">
    <property type="entry name" value="Salvage_MtnB_euk"/>
</dbReference>
<dbReference type="NCBIfam" id="TIGR03328">
    <property type="entry name" value="salvage_mtnB"/>
    <property type="match status" value="1"/>
</dbReference>
<dbReference type="PANTHER" id="PTHR10640">
    <property type="entry name" value="METHYLTHIORIBULOSE-1-PHOSPHATE DEHYDRATASE"/>
    <property type="match status" value="1"/>
</dbReference>
<dbReference type="PANTHER" id="PTHR10640:SF7">
    <property type="entry name" value="METHYLTHIORIBULOSE-1-PHOSPHATE DEHYDRATASE"/>
    <property type="match status" value="1"/>
</dbReference>
<dbReference type="Pfam" id="PF00596">
    <property type="entry name" value="Aldolase_II"/>
    <property type="match status" value="1"/>
</dbReference>
<dbReference type="SMART" id="SM01007">
    <property type="entry name" value="Aldolase_II"/>
    <property type="match status" value="1"/>
</dbReference>
<dbReference type="SUPFAM" id="SSF53639">
    <property type="entry name" value="AraD/HMP-PK domain-like"/>
    <property type="match status" value="1"/>
</dbReference>
<organism>
    <name type="scientific">Botryotinia fuckeliana (strain B05.10)</name>
    <name type="common">Noble rot fungus</name>
    <name type="synonym">Botrytis cinerea</name>
    <dbReference type="NCBI Taxonomy" id="332648"/>
    <lineage>
        <taxon>Eukaryota</taxon>
        <taxon>Fungi</taxon>
        <taxon>Dikarya</taxon>
        <taxon>Ascomycota</taxon>
        <taxon>Pezizomycotina</taxon>
        <taxon>Leotiomycetes</taxon>
        <taxon>Helotiales</taxon>
        <taxon>Sclerotiniaceae</taxon>
        <taxon>Botrytis</taxon>
    </lineage>
</organism>
<gene>
    <name evidence="1" type="primary">mde1</name>
    <name type="ORF">BC1G_00083</name>
    <name type="ORF">BCIN_01g08310</name>
</gene>
<evidence type="ECO:0000255" key="1">
    <source>
        <dbReference type="HAMAP-Rule" id="MF_03116"/>
    </source>
</evidence>